<keyword id="KW-0694">RNA-binding</keyword>
<keyword id="KW-0804">Transcription</keyword>
<keyword id="KW-0889">Transcription antitermination</keyword>
<keyword id="KW-0805">Transcription regulation</keyword>
<gene>
    <name evidence="1" type="primary">nusB</name>
    <name type="ordered locus">ROP_69270</name>
</gene>
<sequence>MSGTHKKLGARHKARKRAVDFLFEAEARDLDPVDLATERAELSGKDDSVAPVAPYTVTVVTGVAENLDRLDEVISSHLQDWTLERLPAVDRAILRIAVWELFHATDVPPVVAVDEAVELAKQLSTDESPGFVNGILGQVVLVAPQVRSAAAATSRRAETADGESNDARS</sequence>
<organism>
    <name type="scientific">Rhodococcus opacus (strain B4)</name>
    <dbReference type="NCBI Taxonomy" id="632772"/>
    <lineage>
        <taxon>Bacteria</taxon>
        <taxon>Bacillati</taxon>
        <taxon>Actinomycetota</taxon>
        <taxon>Actinomycetes</taxon>
        <taxon>Mycobacteriales</taxon>
        <taxon>Nocardiaceae</taxon>
        <taxon>Rhodococcus</taxon>
    </lineage>
</organism>
<name>NUSB_RHOOB</name>
<feature type="chain" id="PRO_1000192453" description="Transcription antitermination protein NusB">
    <location>
        <begin position="1"/>
        <end position="169"/>
    </location>
</feature>
<evidence type="ECO:0000255" key="1">
    <source>
        <dbReference type="HAMAP-Rule" id="MF_00073"/>
    </source>
</evidence>
<accession>C1B4I5</accession>
<dbReference type="EMBL" id="AP011115">
    <property type="protein sequence ID" value="BAH55174.1"/>
    <property type="molecule type" value="Genomic_DNA"/>
</dbReference>
<dbReference type="RefSeq" id="WP_015890603.1">
    <property type="nucleotide sequence ID" value="NC_012522.1"/>
</dbReference>
<dbReference type="SMR" id="C1B4I5"/>
<dbReference type="STRING" id="632772.ROP_69270"/>
<dbReference type="KEGG" id="rop:ROP_69270"/>
<dbReference type="PATRIC" id="fig|632772.20.peg.7218"/>
<dbReference type="HOGENOM" id="CLU_087843_2_3_11"/>
<dbReference type="OrthoDB" id="3528057at2"/>
<dbReference type="Proteomes" id="UP000002212">
    <property type="component" value="Chromosome"/>
</dbReference>
<dbReference type="GO" id="GO:0005829">
    <property type="term" value="C:cytosol"/>
    <property type="evidence" value="ECO:0007669"/>
    <property type="project" value="TreeGrafter"/>
</dbReference>
<dbReference type="GO" id="GO:0003723">
    <property type="term" value="F:RNA binding"/>
    <property type="evidence" value="ECO:0007669"/>
    <property type="project" value="UniProtKB-UniRule"/>
</dbReference>
<dbReference type="GO" id="GO:0006353">
    <property type="term" value="P:DNA-templated transcription termination"/>
    <property type="evidence" value="ECO:0007669"/>
    <property type="project" value="UniProtKB-UniRule"/>
</dbReference>
<dbReference type="GO" id="GO:0031564">
    <property type="term" value="P:transcription antitermination"/>
    <property type="evidence" value="ECO:0007669"/>
    <property type="project" value="UniProtKB-KW"/>
</dbReference>
<dbReference type="CDD" id="cd00619">
    <property type="entry name" value="Terminator_NusB"/>
    <property type="match status" value="1"/>
</dbReference>
<dbReference type="Gene3D" id="1.10.940.10">
    <property type="entry name" value="NusB-like"/>
    <property type="match status" value="1"/>
</dbReference>
<dbReference type="HAMAP" id="MF_00073">
    <property type="entry name" value="NusB"/>
    <property type="match status" value="1"/>
</dbReference>
<dbReference type="InterPro" id="IPR035926">
    <property type="entry name" value="NusB-like_sf"/>
</dbReference>
<dbReference type="InterPro" id="IPR011605">
    <property type="entry name" value="NusB_fam"/>
</dbReference>
<dbReference type="InterPro" id="IPR006027">
    <property type="entry name" value="NusB_RsmB_TIM44"/>
</dbReference>
<dbReference type="NCBIfam" id="TIGR01951">
    <property type="entry name" value="nusB"/>
    <property type="match status" value="1"/>
</dbReference>
<dbReference type="PANTHER" id="PTHR11078:SF3">
    <property type="entry name" value="ANTITERMINATION NUSB DOMAIN-CONTAINING PROTEIN"/>
    <property type="match status" value="1"/>
</dbReference>
<dbReference type="PANTHER" id="PTHR11078">
    <property type="entry name" value="N UTILIZATION SUBSTANCE PROTEIN B-RELATED"/>
    <property type="match status" value="1"/>
</dbReference>
<dbReference type="Pfam" id="PF01029">
    <property type="entry name" value="NusB"/>
    <property type="match status" value="1"/>
</dbReference>
<dbReference type="SUPFAM" id="SSF48013">
    <property type="entry name" value="NusB-like"/>
    <property type="match status" value="1"/>
</dbReference>
<protein>
    <recommendedName>
        <fullName evidence="1">Transcription antitermination protein NusB</fullName>
    </recommendedName>
    <alternativeName>
        <fullName evidence="1">Antitermination factor NusB</fullName>
    </alternativeName>
</protein>
<comment type="function">
    <text evidence="1">Involved in transcription antitermination. Required for transcription of ribosomal RNA (rRNA) genes. Binds specifically to the boxA antiterminator sequence of the ribosomal RNA (rrn) operons.</text>
</comment>
<comment type="similarity">
    <text evidence="1">Belongs to the NusB family.</text>
</comment>
<proteinExistence type="inferred from homology"/>
<reference key="1">
    <citation type="submission" date="2009-03" db="EMBL/GenBank/DDBJ databases">
        <title>Comparison of the complete genome sequences of Rhodococcus erythropolis PR4 and Rhodococcus opacus B4.</title>
        <authorList>
            <person name="Takarada H."/>
            <person name="Sekine M."/>
            <person name="Hosoyama A."/>
            <person name="Yamada R."/>
            <person name="Fujisawa T."/>
            <person name="Omata S."/>
            <person name="Shimizu A."/>
            <person name="Tsukatani N."/>
            <person name="Tanikawa S."/>
            <person name="Fujita N."/>
            <person name="Harayama S."/>
        </authorList>
    </citation>
    <scope>NUCLEOTIDE SEQUENCE [LARGE SCALE GENOMIC DNA]</scope>
    <source>
        <strain>B4</strain>
    </source>
</reference>